<reference key="1">
    <citation type="journal article" date="2004" name="Nat. Genet.">
        <title>Complete sequencing and characterization of 21,243 full-length human cDNAs.</title>
        <authorList>
            <person name="Ota T."/>
            <person name="Suzuki Y."/>
            <person name="Nishikawa T."/>
            <person name="Otsuki T."/>
            <person name="Sugiyama T."/>
            <person name="Irie R."/>
            <person name="Wakamatsu A."/>
            <person name="Hayashi K."/>
            <person name="Sato H."/>
            <person name="Nagai K."/>
            <person name="Kimura K."/>
            <person name="Makita H."/>
            <person name="Sekine M."/>
            <person name="Obayashi M."/>
            <person name="Nishi T."/>
            <person name="Shibahara T."/>
            <person name="Tanaka T."/>
            <person name="Ishii S."/>
            <person name="Yamamoto J."/>
            <person name="Saito K."/>
            <person name="Kawai Y."/>
            <person name="Isono Y."/>
            <person name="Nakamura Y."/>
            <person name="Nagahari K."/>
            <person name="Murakami K."/>
            <person name="Yasuda T."/>
            <person name="Iwayanagi T."/>
            <person name="Wagatsuma M."/>
            <person name="Shiratori A."/>
            <person name="Sudo H."/>
            <person name="Hosoiri T."/>
            <person name="Kaku Y."/>
            <person name="Kodaira H."/>
            <person name="Kondo H."/>
            <person name="Sugawara M."/>
            <person name="Takahashi M."/>
            <person name="Kanda K."/>
            <person name="Yokoi T."/>
            <person name="Furuya T."/>
            <person name="Kikkawa E."/>
            <person name="Omura Y."/>
            <person name="Abe K."/>
            <person name="Kamihara K."/>
            <person name="Katsuta N."/>
            <person name="Sato K."/>
            <person name="Tanikawa M."/>
            <person name="Yamazaki M."/>
            <person name="Ninomiya K."/>
            <person name="Ishibashi T."/>
            <person name="Yamashita H."/>
            <person name="Murakawa K."/>
            <person name="Fujimori K."/>
            <person name="Tanai H."/>
            <person name="Kimata M."/>
            <person name="Watanabe M."/>
            <person name="Hiraoka S."/>
            <person name="Chiba Y."/>
            <person name="Ishida S."/>
            <person name="Ono Y."/>
            <person name="Takiguchi S."/>
            <person name="Watanabe S."/>
            <person name="Yosida M."/>
            <person name="Hotuta T."/>
            <person name="Kusano J."/>
            <person name="Kanehori K."/>
            <person name="Takahashi-Fujii A."/>
            <person name="Hara H."/>
            <person name="Tanase T.-O."/>
            <person name="Nomura Y."/>
            <person name="Togiya S."/>
            <person name="Komai F."/>
            <person name="Hara R."/>
            <person name="Takeuchi K."/>
            <person name="Arita M."/>
            <person name="Imose N."/>
            <person name="Musashino K."/>
            <person name="Yuuki H."/>
            <person name="Oshima A."/>
            <person name="Sasaki N."/>
            <person name="Aotsuka S."/>
            <person name="Yoshikawa Y."/>
            <person name="Matsunawa H."/>
            <person name="Ichihara T."/>
            <person name="Shiohata N."/>
            <person name="Sano S."/>
            <person name="Moriya S."/>
            <person name="Momiyama H."/>
            <person name="Satoh N."/>
            <person name="Takami S."/>
            <person name="Terashima Y."/>
            <person name="Suzuki O."/>
            <person name="Nakagawa S."/>
            <person name="Senoh A."/>
            <person name="Mizoguchi H."/>
            <person name="Goto Y."/>
            <person name="Shimizu F."/>
            <person name="Wakebe H."/>
            <person name="Hishigaki H."/>
            <person name="Watanabe T."/>
            <person name="Sugiyama A."/>
            <person name="Takemoto M."/>
            <person name="Kawakami B."/>
            <person name="Yamazaki M."/>
            <person name="Watanabe K."/>
            <person name="Kumagai A."/>
            <person name="Itakura S."/>
            <person name="Fukuzumi Y."/>
            <person name="Fujimori Y."/>
            <person name="Komiyama M."/>
            <person name="Tashiro H."/>
            <person name="Tanigami A."/>
            <person name="Fujiwara T."/>
            <person name="Ono T."/>
            <person name="Yamada K."/>
            <person name="Fujii Y."/>
            <person name="Ozaki K."/>
            <person name="Hirao M."/>
            <person name="Ohmori Y."/>
            <person name="Kawabata A."/>
            <person name="Hikiji T."/>
            <person name="Kobatake N."/>
            <person name="Inagaki H."/>
            <person name="Ikema Y."/>
            <person name="Okamoto S."/>
            <person name="Okitani R."/>
            <person name="Kawakami T."/>
            <person name="Noguchi S."/>
            <person name="Itoh T."/>
            <person name="Shigeta K."/>
            <person name="Senba T."/>
            <person name="Matsumura K."/>
            <person name="Nakajima Y."/>
            <person name="Mizuno T."/>
            <person name="Morinaga M."/>
            <person name="Sasaki M."/>
            <person name="Togashi T."/>
            <person name="Oyama M."/>
            <person name="Hata H."/>
            <person name="Watanabe M."/>
            <person name="Komatsu T."/>
            <person name="Mizushima-Sugano J."/>
            <person name="Satoh T."/>
            <person name="Shirai Y."/>
            <person name="Takahashi Y."/>
            <person name="Nakagawa K."/>
            <person name="Okumura K."/>
            <person name="Nagase T."/>
            <person name="Nomura N."/>
            <person name="Kikuchi H."/>
            <person name="Masuho Y."/>
            <person name="Yamashita R."/>
            <person name="Nakai K."/>
            <person name="Yada T."/>
            <person name="Nakamura Y."/>
            <person name="Ohara O."/>
            <person name="Isogai T."/>
            <person name="Sugano S."/>
        </authorList>
    </citation>
    <scope>NUCLEOTIDE SEQUENCE [LARGE SCALE MRNA] (ISOFORM 1)</scope>
    <scope>VARIANTS ALA-6 AND LYS-169</scope>
</reference>
<reference key="2">
    <citation type="submission" date="2005-03" db="EMBL/GenBank/DDBJ databases">
        <authorList>
            <person name="Totoki Y."/>
            <person name="Toyoda A."/>
            <person name="Takeda T."/>
            <person name="Sakaki Y."/>
            <person name="Tanaka A."/>
            <person name="Yokoyama S."/>
            <person name="Ohara O."/>
            <person name="Nagase T."/>
            <person name="Kikuno R.F."/>
        </authorList>
    </citation>
    <scope>NUCLEOTIDE SEQUENCE [LARGE SCALE MRNA] (ISOFORM 2)</scope>
    <source>
        <tissue>Brain</tissue>
    </source>
</reference>
<reference key="3">
    <citation type="journal article" date="2006" name="Nature">
        <title>DNA sequence of human chromosome 17 and analysis of rearrangement in the human lineage.</title>
        <authorList>
            <person name="Zody M.C."/>
            <person name="Garber M."/>
            <person name="Adams D.J."/>
            <person name="Sharpe T."/>
            <person name="Harrow J."/>
            <person name="Lupski J.R."/>
            <person name="Nicholson C."/>
            <person name="Searle S.M."/>
            <person name="Wilming L."/>
            <person name="Young S.K."/>
            <person name="Abouelleil A."/>
            <person name="Allen N.R."/>
            <person name="Bi W."/>
            <person name="Bloom T."/>
            <person name="Borowsky M.L."/>
            <person name="Bugalter B.E."/>
            <person name="Butler J."/>
            <person name="Chang J.L."/>
            <person name="Chen C.-K."/>
            <person name="Cook A."/>
            <person name="Corum B."/>
            <person name="Cuomo C.A."/>
            <person name="de Jong P.J."/>
            <person name="DeCaprio D."/>
            <person name="Dewar K."/>
            <person name="FitzGerald M."/>
            <person name="Gilbert J."/>
            <person name="Gibson R."/>
            <person name="Gnerre S."/>
            <person name="Goldstein S."/>
            <person name="Grafham D.V."/>
            <person name="Grocock R."/>
            <person name="Hafez N."/>
            <person name="Hagopian D.S."/>
            <person name="Hart E."/>
            <person name="Norman C.H."/>
            <person name="Humphray S."/>
            <person name="Jaffe D.B."/>
            <person name="Jones M."/>
            <person name="Kamal M."/>
            <person name="Khodiyar V.K."/>
            <person name="LaButti K."/>
            <person name="Laird G."/>
            <person name="Lehoczky J."/>
            <person name="Liu X."/>
            <person name="Lokyitsang T."/>
            <person name="Loveland J."/>
            <person name="Lui A."/>
            <person name="Macdonald P."/>
            <person name="Major J.E."/>
            <person name="Matthews L."/>
            <person name="Mauceli E."/>
            <person name="McCarroll S.A."/>
            <person name="Mihalev A.H."/>
            <person name="Mudge J."/>
            <person name="Nguyen C."/>
            <person name="Nicol R."/>
            <person name="O'Leary S.B."/>
            <person name="Osoegawa K."/>
            <person name="Schwartz D.C."/>
            <person name="Shaw-Smith C."/>
            <person name="Stankiewicz P."/>
            <person name="Steward C."/>
            <person name="Swarbreck D."/>
            <person name="Venkataraman V."/>
            <person name="Whittaker C.A."/>
            <person name="Yang X."/>
            <person name="Zimmer A.R."/>
            <person name="Bradley A."/>
            <person name="Hubbard T."/>
            <person name="Birren B.W."/>
            <person name="Rogers J."/>
            <person name="Lander E.S."/>
            <person name="Nusbaum C."/>
        </authorList>
    </citation>
    <scope>NUCLEOTIDE SEQUENCE [LARGE SCALE GENOMIC DNA]</scope>
</reference>
<reference key="4">
    <citation type="journal article" date="2004" name="Genome Res.">
        <title>The status, quality, and expansion of the NIH full-length cDNA project: the Mammalian Gene Collection (MGC).</title>
        <authorList>
            <consortium name="The MGC Project Team"/>
        </authorList>
    </citation>
    <scope>NUCLEOTIDE SEQUENCE [LARGE SCALE MRNA] (ISOFORM 1)</scope>
    <scope>VARIANTS ALA-6 AND LYS-169</scope>
    <source>
        <tissue>Lung</tissue>
        <tissue>Placenta</tissue>
    </source>
</reference>
<reference key="5">
    <citation type="submission" date="2005-08" db="UniProtKB">
        <authorList>
            <person name="Bienvenut W.V."/>
        </authorList>
    </citation>
    <scope>PROTEIN SEQUENCE OF 2-12 AND 87-99</scope>
    <scope>CLEAVAGE OF INITIATOR METHIONINE</scope>
    <scope>ACETYLATION AT ALA-2</scope>
    <scope>SUBCELLULAR LOCATION</scope>
    <scope>IDENTIFICATION BY MASS SPECTROMETRY</scope>
    <scope>VARIANT ALA-6</scope>
    <source>
        <tissue>Cervix carcinoma</tissue>
    </source>
</reference>
<reference key="6">
    <citation type="journal article" date="2001" name="Yeast">
        <title>Characterization of 16 novel human genes showing high similarity to yeast sequences.</title>
        <authorList>
            <person name="Stanchi F."/>
            <person name="Bertocco E."/>
            <person name="Toppo S."/>
            <person name="Dioguardi R."/>
            <person name="Simionati B."/>
            <person name="Cannata N."/>
            <person name="Zimbello R."/>
            <person name="Lanfranchi G."/>
            <person name="Valle G."/>
        </authorList>
    </citation>
    <scope>NUCLEOTIDE SEQUENCE [MRNA] OF 400-485</scope>
    <source>
        <tissue>Brain</tissue>
    </source>
</reference>
<reference key="7">
    <citation type="journal article" date="2002" name="Mol. Biol. Cell">
        <title>Functional proteomic analysis of human nucleolus.</title>
        <authorList>
            <person name="Scherl A."/>
            <person name="Coute Y."/>
            <person name="Deon C."/>
            <person name="Calle A."/>
            <person name="Kindbeiter K."/>
            <person name="Sanchez J.-C."/>
            <person name="Greco A."/>
            <person name="Hochstrasser D.F."/>
            <person name="Diaz J.-J."/>
        </authorList>
    </citation>
    <scope>SUBCELLULAR LOCATION [LARGE SCALE ANALYSIS]</scope>
    <source>
        <tissue>Cervix carcinoma</tissue>
    </source>
</reference>
<reference key="8">
    <citation type="journal article" date="2007" name="Science">
        <title>ATM and ATR substrate analysis reveals extensive protein networks responsive to DNA damage.</title>
        <authorList>
            <person name="Matsuoka S."/>
            <person name="Ballif B.A."/>
            <person name="Smogorzewska A."/>
            <person name="McDonald E.R. III"/>
            <person name="Hurov K.E."/>
            <person name="Luo J."/>
            <person name="Bakalarski C.E."/>
            <person name="Zhao Z."/>
            <person name="Solimini N."/>
            <person name="Lerenthal Y."/>
            <person name="Shiloh Y."/>
            <person name="Gygi S.P."/>
            <person name="Elledge S.J."/>
        </authorList>
    </citation>
    <scope>PHOSPHORYLATION [LARGE SCALE ANALYSIS] AT SER-79</scope>
    <scope>IDENTIFICATION BY MASS SPECTROMETRY [LARGE SCALE ANALYSIS]</scope>
    <source>
        <tissue>Embryonic kidney</tissue>
    </source>
</reference>
<reference key="9">
    <citation type="journal article" date="2009" name="Anal. Chem.">
        <title>Lys-N and trypsin cover complementary parts of the phosphoproteome in a refined SCX-based approach.</title>
        <authorList>
            <person name="Gauci S."/>
            <person name="Helbig A.O."/>
            <person name="Slijper M."/>
            <person name="Krijgsveld J."/>
            <person name="Heck A.J."/>
            <person name="Mohammed S."/>
        </authorList>
    </citation>
    <scope>ACETYLATION [LARGE SCALE ANALYSIS] AT ALA-2</scope>
    <scope>VARIANT [LARGE SCALE ANALYSIS] ALA-6</scope>
    <scope>CLEAVAGE OF INITIATOR METHIONINE [LARGE SCALE ANALYSIS]</scope>
    <scope>IDENTIFICATION BY MASS SPECTROMETRY [LARGE SCALE ANALYSIS]</scope>
</reference>
<reference key="10">
    <citation type="journal article" date="2011" name="BMC Syst. Biol.">
        <title>Initial characterization of the human central proteome.</title>
        <authorList>
            <person name="Burkard T.R."/>
            <person name="Planyavsky M."/>
            <person name="Kaupe I."/>
            <person name="Breitwieser F.P."/>
            <person name="Buerckstuemmer T."/>
            <person name="Bennett K.L."/>
            <person name="Superti-Furga G."/>
            <person name="Colinge J."/>
        </authorList>
    </citation>
    <scope>IDENTIFICATION BY MASS SPECTROMETRY [LARGE SCALE ANALYSIS]</scope>
</reference>
<reference key="11">
    <citation type="journal article" date="2012" name="Mol. Cell. Proteomics">
        <title>Comparative large-scale characterisation of plant vs. mammal proteins reveals similar and idiosyncratic N-alpha acetylation features.</title>
        <authorList>
            <person name="Bienvenut W.V."/>
            <person name="Sumpton D."/>
            <person name="Martinez A."/>
            <person name="Lilla S."/>
            <person name="Espagne C."/>
            <person name="Meinnel T."/>
            <person name="Giglione C."/>
        </authorList>
    </citation>
    <scope>ACETYLATION [LARGE SCALE ANALYSIS] AT ALA-2</scope>
    <scope>VARIANT [LARGE SCALE ANALYSIS] ALA-6</scope>
    <scope>CLEAVAGE OF INITIATOR METHIONINE [LARGE SCALE ANALYSIS]</scope>
    <scope>IDENTIFICATION BY MASS SPECTROMETRY [LARGE SCALE ANALYSIS]</scope>
</reference>
<reference key="12">
    <citation type="journal article" date="2012" name="Proc. Natl. Acad. Sci. U.S.A.">
        <title>N-terminal acetylome analyses and functional insights of the N-terminal acetyltransferase NatB.</title>
        <authorList>
            <person name="Van Damme P."/>
            <person name="Lasa M."/>
            <person name="Polevoda B."/>
            <person name="Gazquez C."/>
            <person name="Elosegui-Artola A."/>
            <person name="Kim D.S."/>
            <person name="De Juan-Pardo E."/>
            <person name="Demeyer K."/>
            <person name="Hole K."/>
            <person name="Larrea E."/>
            <person name="Timmerman E."/>
            <person name="Prieto J."/>
            <person name="Arnesen T."/>
            <person name="Sherman F."/>
            <person name="Gevaert K."/>
            <person name="Aldabe R."/>
        </authorList>
    </citation>
    <scope>ACETYLATION [LARGE SCALE ANALYSIS] AT ALA-2</scope>
    <scope>VARIANT [LARGE SCALE ANALYSIS] ALA-6</scope>
    <scope>CLEAVAGE OF INITIATOR METHIONINE [LARGE SCALE ANALYSIS]</scope>
    <scope>IDENTIFICATION BY MASS SPECTROMETRY [LARGE SCALE ANALYSIS]</scope>
</reference>
<reference key="13">
    <citation type="journal article" date="2016" name="J. Biol. Chem.">
        <title>The crystal structure of the ubiquitin-like domain of ribosome assembly factor Ytm1 and characterization of its interaction with the AAA-ATPase Midasin.</title>
        <authorList>
            <person name="Romes E.M."/>
            <person name="Sobhany M."/>
            <person name="Stanley R.E."/>
        </authorList>
    </citation>
    <scope>INTERACTION WITH MDN1</scope>
</reference>
<reference key="14">
    <citation type="journal article" date="2006" name="Science">
        <title>The consensus coding sequences of human breast and colorectal cancers.</title>
        <authorList>
            <person name="Sjoeblom T."/>
            <person name="Jones S."/>
            <person name="Wood L.D."/>
            <person name="Parsons D.W."/>
            <person name="Lin J."/>
            <person name="Barber T.D."/>
            <person name="Mandelker D."/>
            <person name="Leary R.J."/>
            <person name="Ptak J."/>
            <person name="Silliman N."/>
            <person name="Szabo S."/>
            <person name="Buckhaults P."/>
            <person name="Farrell C."/>
            <person name="Meeh P."/>
            <person name="Markowitz S.D."/>
            <person name="Willis J."/>
            <person name="Dawson D."/>
            <person name="Willson J.K.V."/>
            <person name="Gazdar A.F."/>
            <person name="Hartigan J."/>
            <person name="Wu L."/>
            <person name="Liu C."/>
            <person name="Parmigiani G."/>
            <person name="Park B.H."/>
            <person name="Bachman K.E."/>
            <person name="Papadopoulos N."/>
            <person name="Vogelstein B."/>
            <person name="Kinzler K.W."/>
            <person name="Velculescu V.E."/>
        </authorList>
    </citation>
    <scope>VARIANT [LARGE SCALE ANALYSIS] LYS-319</scope>
</reference>
<protein>
    <recommendedName>
        <fullName>Notchless protein homolog 1</fullName>
    </recommendedName>
</protein>
<comment type="function">
    <text evidence="1">Plays a role in regulating Notch activity. Plays a role in regulating the expression of CDKN1A and several members of the Wnt pathway, probably via its effects on Notch activity. Required during embryogenesis for inner mass cell survival (By similarity).</text>
</comment>
<comment type="subunit">
    <text evidence="2 8">Associates with the pre-60S ribosomal particle. Interacts (via WD repeats) with uL18 (By similarity). Interacts (via UBL domain) with MDN1 (via VWFA/MIDAS domain) (PubMed:26601951).</text>
</comment>
<comment type="interaction">
    <interactant intactId="EBI-743801">
        <id>Q9NVX2</id>
    </interactant>
    <interactant intactId="EBI-641642">
        <id>Q9BVP2</id>
        <label>GNL3</label>
    </interactant>
    <organismsDiffer>false</organismsDiffer>
    <experiments>2</experiments>
</comment>
<comment type="subcellular location">
    <subcellularLocation>
        <location evidence="4 9">Nucleus</location>
        <location evidence="4 9">Nucleolus</location>
    </subcellularLocation>
</comment>
<comment type="alternative products">
    <event type="alternative splicing"/>
    <isoform>
        <id>Q9NVX2-1</id>
        <name>1</name>
        <sequence type="displayed"/>
    </isoform>
    <isoform>
        <id>Q9NVX2-2</id>
        <name>2</name>
        <sequence type="described" ref="VSP_040555"/>
    </isoform>
</comment>
<comment type="similarity">
    <text evidence="11">Belongs to the NLE1/RSA4 family.</text>
</comment>
<comment type="sequence caution" evidence="11">
    <conflict type="erroneous initiation">
        <sequence resource="EMBL-CDS" id="BAD92348"/>
    </conflict>
    <text>Extended N-terminus.</text>
</comment>
<keyword id="KW-0002">3D-structure</keyword>
<keyword id="KW-0007">Acetylation</keyword>
<keyword id="KW-0025">Alternative splicing</keyword>
<keyword id="KW-0903">Direct protein sequencing</keyword>
<keyword id="KW-0914">Notch signaling pathway</keyword>
<keyword id="KW-0539">Nucleus</keyword>
<keyword id="KW-0597">Phosphoprotein</keyword>
<keyword id="KW-1267">Proteomics identification</keyword>
<keyword id="KW-1185">Reference proteome</keyword>
<keyword id="KW-0677">Repeat</keyword>
<keyword id="KW-0853">WD repeat</keyword>
<proteinExistence type="evidence at protein level"/>
<feature type="initiator methionine" description="Removed" evidence="9 13 14 15">
    <location>
        <position position="1"/>
    </location>
</feature>
<feature type="chain" id="PRO_0000051098" description="Notchless protein homolog 1">
    <location>
        <begin position="2"/>
        <end position="485"/>
    </location>
</feature>
<feature type="repeat" description="WD 1" evidence="3">
    <location>
        <begin position="112"/>
        <end position="151"/>
    </location>
</feature>
<feature type="repeat" description="WD 2" evidence="3">
    <location>
        <begin position="154"/>
        <end position="193"/>
    </location>
</feature>
<feature type="repeat" description="WD 3" evidence="3">
    <location>
        <begin position="197"/>
        <end position="241"/>
    </location>
</feature>
<feature type="repeat" description="WD 4" evidence="3">
    <location>
        <begin position="244"/>
        <end position="282"/>
    </location>
</feature>
<feature type="repeat" description="WD 5" evidence="3">
    <location>
        <begin position="325"/>
        <end position="366"/>
    </location>
</feature>
<feature type="repeat" description="WD 6" evidence="3">
    <location>
        <begin position="370"/>
        <end position="409"/>
    </location>
</feature>
<feature type="repeat" description="WD 7" evidence="3">
    <location>
        <begin position="412"/>
        <end position="451"/>
    </location>
</feature>
<feature type="repeat" description="WD 8" evidence="3">
    <location>
        <begin position="454"/>
        <end position="485"/>
    </location>
</feature>
<feature type="region of interest" description="Ubiquitin-like (UBL) domain" evidence="2">
    <location>
        <begin position="14"/>
        <end position="96"/>
    </location>
</feature>
<feature type="modified residue" description="N-acetylalanine" evidence="9 13 14 15">
    <location>
        <position position="2"/>
    </location>
</feature>
<feature type="modified residue" description="Phosphoserine" evidence="12">
    <location>
        <position position="79"/>
    </location>
</feature>
<feature type="splice variant" id="VSP_040555" description="In isoform 2." evidence="10">
    <location>
        <begin position="1"/>
        <end position="292"/>
    </location>
</feature>
<feature type="sequence variant" id="VAR_060327" description="In dbSNP:rs1471615." evidence="5 6 9 13 14 15">
    <original>P</original>
    <variation>A</variation>
    <location>
        <position position="6"/>
    </location>
</feature>
<feature type="sequence variant" id="VAR_060328" description="In dbSNP:rs7215209." evidence="5 6">
    <original>R</original>
    <variation>K</variation>
    <location>
        <position position="169"/>
    </location>
</feature>
<feature type="sequence variant" id="VAR_035886" description="In a breast cancer sample; somatic mutation; dbSNP:rs75635495." evidence="7">
    <original>Q</original>
    <variation>K</variation>
    <location>
        <position position="319"/>
    </location>
</feature>
<feature type="sequence variant" id="VAR_057616" description="In dbSNP:rs2306513.">
    <original>Y</original>
    <variation>H</variation>
    <location>
        <position position="406"/>
    </location>
</feature>
<feature type="sequence variant" id="VAR_057617" description="In dbSNP:rs2306512.">
    <original>S</original>
    <variation>N</variation>
    <location>
        <position position="434"/>
    </location>
</feature>
<feature type="sequence conflict" description="In Ref. 2; BAD92348." evidence="11" ref="2">
    <original>S</original>
    <variation>F</variation>
    <location>
        <position position="321"/>
    </location>
</feature>
<feature type="strand" evidence="16">
    <location>
        <begin position="16"/>
        <end position="22"/>
    </location>
</feature>
<feature type="strand" evidence="16">
    <location>
        <begin position="28"/>
        <end position="36"/>
    </location>
</feature>
<feature type="helix" evidence="16">
    <location>
        <begin position="41"/>
        <end position="52"/>
    </location>
</feature>
<feature type="strand" evidence="16">
    <location>
        <begin position="60"/>
        <end position="64"/>
    </location>
</feature>
<feature type="helix" evidence="16">
    <location>
        <begin position="73"/>
        <end position="78"/>
    </location>
</feature>
<feature type="strand" evidence="16">
    <location>
        <begin position="86"/>
        <end position="94"/>
    </location>
</feature>
<evidence type="ECO:0000250" key="1"/>
<evidence type="ECO:0000250" key="2">
    <source>
        <dbReference type="UniProtKB" id="P25382"/>
    </source>
</evidence>
<evidence type="ECO:0000255" key="3"/>
<evidence type="ECO:0000269" key="4">
    <source>
    </source>
</evidence>
<evidence type="ECO:0000269" key="5">
    <source>
    </source>
</evidence>
<evidence type="ECO:0000269" key="6">
    <source>
    </source>
</evidence>
<evidence type="ECO:0000269" key="7">
    <source>
    </source>
</evidence>
<evidence type="ECO:0000269" key="8">
    <source>
    </source>
</evidence>
<evidence type="ECO:0000269" key="9">
    <source ref="5"/>
</evidence>
<evidence type="ECO:0000303" key="10">
    <source ref="2"/>
</evidence>
<evidence type="ECO:0000305" key="11"/>
<evidence type="ECO:0007744" key="12">
    <source>
    </source>
</evidence>
<evidence type="ECO:0007744" key="13">
    <source>
    </source>
</evidence>
<evidence type="ECO:0007744" key="14">
    <source>
    </source>
</evidence>
<evidence type="ECO:0007744" key="15">
    <source>
    </source>
</evidence>
<evidence type="ECO:0007829" key="16">
    <source>
        <dbReference type="PDB" id="6WAJ"/>
    </source>
</evidence>
<sequence>MAAAVPDEAVARDVQRLLVQFQDEGGQLLGSPFDVPVDITPDRLQLVCNALLAQEDPLPLAFFVHDAEIVSSLGKTLESQAVETEKVLDIIYQPQAIFRVRAVTRCTSSLEGHSEAVISVAFSPTGKYLASGSGDTTVRFWDLSTETPHFTCKGHRHWVLSISWSPDGRKLASGCKNGQILLWDPSTGKQVGRTLAGHSKWITGLSWEPLHANPECRYVASSSKDGSVRIWDTTAGRCERILTGHTQSVTCLRWGGDGLLYSASQDRTIKVWRAHDGVLCRTLQGHGHWVNTMALSTDYALRTGAFEPAEASVNPQDLQGSLQELKERALSRYNLVRGQGPERLVSGSDDFTLFLWSPAEDKKPLTRMTGHQALINQVLFSPDSRIVASASFDKSIKLWDGRTGKYLASLRGHVAAVYQIAWSADSRLLVSGSSDSTLKVWDVKAQKLAMDLPGHADEVYAVDWSPDGQRVASGGKDKCLRIWRR</sequence>
<dbReference type="EMBL" id="AK001320">
    <property type="protein sequence ID" value="BAA91621.1"/>
    <property type="molecule type" value="mRNA"/>
</dbReference>
<dbReference type="EMBL" id="AB209111">
    <property type="protein sequence ID" value="BAD92348.1"/>
    <property type="status" value="ALT_INIT"/>
    <property type="molecule type" value="mRNA"/>
</dbReference>
<dbReference type="EMBL" id="AC022916">
    <property type="status" value="NOT_ANNOTATED_CDS"/>
    <property type="molecule type" value="Genomic_DNA"/>
</dbReference>
<dbReference type="EMBL" id="BC002884">
    <property type="protein sequence ID" value="AAH02884.2"/>
    <property type="molecule type" value="mRNA"/>
</dbReference>
<dbReference type="EMBL" id="BC012075">
    <property type="protein sequence ID" value="AAH12075.1"/>
    <property type="molecule type" value="mRNA"/>
</dbReference>
<dbReference type="EMBL" id="AJ005257">
    <property type="protein sequence ID" value="CAA06444.1"/>
    <property type="molecule type" value="mRNA"/>
</dbReference>
<dbReference type="CCDS" id="CCDS11291.1">
    <molecule id="Q9NVX2-1"/>
</dbReference>
<dbReference type="CCDS" id="CCDS45647.1">
    <molecule id="Q9NVX2-2"/>
</dbReference>
<dbReference type="RefSeq" id="NP_001014445.1">
    <molecule id="Q9NVX2-2"/>
    <property type="nucleotide sequence ID" value="NM_001014445.2"/>
</dbReference>
<dbReference type="RefSeq" id="NP_060566.2">
    <molecule id="Q9NVX2-1"/>
    <property type="nucleotide sequence ID" value="NM_018096.5"/>
</dbReference>
<dbReference type="RefSeq" id="XP_016880266.1">
    <molecule id="Q9NVX2-2"/>
    <property type="nucleotide sequence ID" value="XM_017024777.2"/>
</dbReference>
<dbReference type="RefSeq" id="XP_054172504.1">
    <molecule id="Q9NVX2-2"/>
    <property type="nucleotide sequence ID" value="XM_054316529.1"/>
</dbReference>
<dbReference type="PDB" id="6WAJ">
    <property type="method" value="X-ray"/>
    <property type="resolution" value="1.90 A"/>
    <property type="chains" value="A=1-97"/>
</dbReference>
<dbReference type="PDB" id="8FL0">
    <property type="method" value="EM"/>
    <property type="resolution" value="2.91 A"/>
    <property type="chains" value="NJ=1-485"/>
</dbReference>
<dbReference type="PDB" id="8FL2">
    <property type="method" value="EM"/>
    <property type="resolution" value="2.67 A"/>
    <property type="chains" value="NJ=1-485"/>
</dbReference>
<dbReference type="PDB" id="8FL3">
    <property type="method" value="EM"/>
    <property type="resolution" value="2.53 A"/>
    <property type="chains" value="NJ=1-485"/>
</dbReference>
<dbReference type="PDB" id="8FL4">
    <property type="method" value="EM"/>
    <property type="resolution" value="2.89 A"/>
    <property type="chains" value="NJ=1-485"/>
</dbReference>
<dbReference type="PDB" id="8INK">
    <property type="method" value="EM"/>
    <property type="resolution" value="3.20 A"/>
    <property type="chains" value="W=1-485"/>
</dbReference>
<dbReference type="PDB" id="8IPD">
    <property type="method" value="EM"/>
    <property type="resolution" value="3.20 A"/>
    <property type="chains" value="W=1-485"/>
</dbReference>
<dbReference type="PDB" id="8IPX">
    <property type="method" value="EM"/>
    <property type="resolution" value="4.30 A"/>
    <property type="chains" value="W=1-485"/>
</dbReference>
<dbReference type="PDB" id="8IPY">
    <property type="method" value="EM"/>
    <property type="resolution" value="3.20 A"/>
    <property type="chains" value="W=1-485"/>
</dbReference>
<dbReference type="PDB" id="8IR1">
    <property type="method" value="EM"/>
    <property type="resolution" value="3.30 A"/>
    <property type="chains" value="N=1-485"/>
</dbReference>
<dbReference type="PDB" id="8IR3">
    <property type="method" value="EM"/>
    <property type="resolution" value="3.50 A"/>
    <property type="chains" value="N=1-485"/>
</dbReference>
<dbReference type="PDB" id="8RL2">
    <property type="method" value="EM"/>
    <property type="resolution" value="2.84 A"/>
    <property type="chains" value="CG=1-485"/>
</dbReference>
<dbReference type="PDBsum" id="6WAJ"/>
<dbReference type="PDBsum" id="8FL0"/>
<dbReference type="PDBsum" id="8FL2"/>
<dbReference type="PDBsum" id="8FL3"/>
<dbReference type="PDBsum" id="8FL4"/>
<dbReference type="PDBsum" id="8INK"/>
<dbReference type="PDBsum" id="8IPD"/>
<dbReference type="PDBsum" id="8IPX"/>
<dbReference type="PDBsum" id="8IPY"/>
<dbReference type="PDBsum" id="8IR1"/>
<dbReference type="PDBsum" id="8IR3"/>
<dbReference type="PDBsum" id="8RL2"/>
<dbReference type="EMDB" id="EMD-19330"/>
<dbReference type="EMDB" id="EMD-29263"/>
<dbReference type="EMDB" id="EMD-29265"/>
<dbReference type="EMDB" id="EMD-29266"/>
<dbReference type="EMDB" id="EMD-29267"/>
<dbReference type="EMDB" id="EMD-35599"/>
<dbReference type="EMDB" id="EMD-35639"/>
<dbReference type="EMDB" id="EMD-35649"/>
<dbReference type="EMDB" id="EMD-35651"/>
<dbReference type="EMDB" id="EMD-35672"/>
<dbReference type="EMDB" id="EMD-35673"/>
<dbReference type="SMR" id="Q9NVX2"/>
<dbReference type="BioGRID" id="119980">
    <property type="interactions" value="240"/>
</dbReference>
<dbReference type="FunCoup" id="Q9NVX2">
    <property type="interactions" value="1933"/>
</dbReference>
<dbReference type="IntAct" id="Q9NVX2">
    <property type="interactions" value="47"/>
</dbReference>
<dbReference type="MINT" id="Q9NVX2"/>
<dbReference type="STRING" id="9606.ENSP00000413572"/>
<dbReference type="GlyGen" id="Q9NVX2">
    <property type="glycosylation" value="2 sites, 1 O-linked glycan (1 site)"/>
</dbReference>
<dbReference type="iPTMnet" id="Q9NVX2"/>
<dbReference type="PhosphoSitePlus" id="Q9NVX2"/>
<dbReference type="SwissPalm" id="Q9NVX2"/>
<dbReference type="BioMuta" id="NLE1"/>
<dbReference type="DMDM" id="296439488"/>
<dbReference type="jPOST" id="Q9NVX2"/>
<dbReference type="MassIVE" id="Q9NVX2"/>
<dbReference type="PaxDb" id="9606-ENSP00000413572"/>
<dbReference type="PeptideAtlas" id="Q9NVX2"/>
<dbReference type="ProteomicsDB" id="82876">
    <molecule id="Q9NVX2-1"/>
</dbReference>
<dbReference type="ProteomicsDB" id="82877">
    <molecule id="Q9NVX2-2"/>
</dbReference>
<dbReference type="Pumba" id="Q9NVX2"/>
<dbReference type="Antibodypedia" id="15565">
    <property type="antibodies" value="235 antibodies from 31 providers"/>
</dbReference>
<dbReference type="DNASU" id="54475"/>
<dbReference type="Ensembl" id="ENST00000442241.9">
    <molecule id="Q9NVX2-1"/>
    <property type="protein sequence ID" value="ENSP00000413572.3"/>
    <property type="gene ID" value="ENSG00000073536.18"/>
</dbReference>
<dbReference type="Ensembl" id="ENST00000586869.5">
    <molecule id="Q9NVX2-2"/>
    <property type="protein sequence ID" value="ENSP00000466588.1"/>
    <property type="gene ID" value="ENSG00000073536.18"/>
</dbReference>
<dbReference type="GeneID" id="54475"/>
<dbReference type="KEGG" id="hsa:54475"/>
<dbReference type="MANE-Select" id="ENST00000442241.9">
    <property type="protein sequence ID" value="ENSP00000413572.3"/>
    <property type="RefSeq nucleotide sequence ID" value="NM_018096.5"/>
    <property type="RefSeq protein sequence ID" value="NP_060566.2"/>
</dbReference>
<dbReference type="UCSC" id="uc002hiy.3">
    <molecule id="Q9NVX2-1"/>
    <property type="organism name" value="human"/>
</dbReference>
<dbReference type="AGR" id="HGNC:19889"/>
<dbReference type="CTD" id="54475"/>
<dbReference type="DisGeNET" id="54475"/>
<dbReference type="GeneCards" id="NLE1"/>
<dbReference type="HGNC" id="HGNC:19889">
    <property type="gene designation" value="NLE1"/>
</dbReference>
<dbReference type="HPA" id="ENSG00000073536">
    <property type="expression patterns" value="Low tissue specificity"/>
</dbReference>
<dbReference type="MIM" id="620924">
    <property type="type" value="gene"/>
</dbReference>
<dbReference type="neXtProt" id="NX_Q9NVX2"/>
<dbReference type="OpenTargets" id="ENSG00000073536"/>
<dbReference type="PharmGKB" id="PA142671263"/>
<dbReference type="VEuPathDB" id="HostDB:ENSG00000073536"/>
<dbReference type="eggNOG" id="KOG0271">
    <property type="taxonomic scope" value="Eukaryota"/>
</dbReference>
<dbReference type="GeneTree" id="ENSGT00940000157881"/>
<dbReference type="HOGENOM" id="CLU_000288_57_16_1"/>
<dbReference type="InParanoid" id="Q9NVX2"/>
<dbReference type="OMA" id="AWEPYHR"/>
<dbReference type="OrthoDB" id="10267436at2759"/>
<dbReference type="PAN-GO" id="Q9NVX2">
    <property type="GO annotations" value="3 GO annotations based on evolutionary models"/>
</dbReference>
<dbReference type="PhylomeDB" id="Q9NVX2"/>
<dbReference type="TreeFam" id="TF300668"/>
<dbReference type="PathwayCommons" id="Q9NVX2"/>
<dbReference type="SignaLink" id="Q9NVX2"/>
<dbReference type="BioGRID-ORCS" id="54475">
    <property type="hits" value="779 hits in 1159 CRISPR screens"/>
</dbReference>
<dbReference type="CD-CODE" id="91857CE7">
    <property type="entry name" value="Nucleolus"/>
</dbReference>
<dbReference type="ChiTaRS" id="NLE1">
    <property type="organism name" value="human"/>
</dbReference>
<dbReference type="GeneWiki" id="NLE1"/>
<dbReference type="GenomeRNAi" id="54475"/>
<dbReference type="Pharos" id="Q9NVX2">
    <property type="development level" value="Tbio"/>
</dbReference>
<dbReference type="PRO" id="PR:Q9NVX2"/>
<dbReference type="Proteomes" id="UP000005640">
    <property type="component" value="Chromosome 17"/>
</dbReference>
<dbReference type="RNAct" id="Q9NVX2">
    <property type="molecule type" value="protein"/>
</dbReference>
<dbReference type="Bgee" id="ENSG00000073536">
    <property type="expression patterns" value="Expressed in primordial germ cell in gonad and 99 other cell types or tissues"/>
</dbReference>
<dbReference type="ExpressionAtlas" id="Q9NVX2">
    <property type="expression patterns" value="baseline and differential"/>
</dbReference>
<dbReference type="GO" id="GO:0005730">
    <property type="term" value="C:nucleolus"/>
    <property type="evidence" value="ECO:0000314"/>
    <property type="project" value="HPA"/>
</dbReference>
<dbReference type="GO" id="GO:0005654">
    <property type="term" value="C:nucleoplasm"/>
    <property type="evidence" value="ECO:0000314"/>
    <property type="project" value="HPA"/>
</dbReference>
<dbReference type="GO" id="GO:0061484">
    <property type="term" value="P:hematopoietic stem cell homeostasis"/>
    <property type="evidence" value="ECO:0007669"/>
    <property type="project" value="Ensembl"/>
</dbReference>
<dbReference type="GO" id="GO:0001826">
    <property type="term" value="P:inner cell mass cell differentiation"/>
    <property type="evidence" value="ECO:0007669"/>
    <property type="project" value="Ensembl"/>
</dbReference>
<dbReference type="GO" id="GO:0001822">
    <property type="term" value="P:kidney development"/>
    <property type="evidence" value="ECO:0007669"/>
    <property type="project" value="Ensembl"/>
</dbReference>
<dbReference type="GO" id="GO:0000278">
    <property type="term" value="P:mitotic cell cycle"/>
    <property type="evidence" value="ECO:0007669"/>
    <property type="project" value="Ensembl"/>
</dbReference>
<dbReference type="GO" id="GO:0045930">
    <property type="term" value="P:negative regulation of mitotic cell cycle"/>
    <property type="evidence" value="ECO:0007669"/>
    <property type="project" value="Ensembl"/>
</dbReference>
<dbReference type="GO" id="GO:0007219">
    <property type="term" value="P:Notch signaling pathway"/>
    <property type="evidence" value="ECO:0007669"/>
    <property type="project" value="UniProtKB-KW"/>
</dbReference>
<dbReference type="GO" id="GO:0090263">
    <property type="term" value="P:positive regulation of canonical Wnt signaling pathway"/>
    <property type="evidence" value="ECO:0007669"/>
    <property type="project" value="Ensembl"/>
</dbReference>
<dbReference type="GO" id="GO:0008593">
    <property type="term" value="P:regulation of Notch signaling pathway"/>
    <property type="evidence" value="ECO:0000318"/>
    <property type="project" value="GO_Central"/>
</dbReference>
<dbReference type="GO" id="GO:0042273">
    <property type="term" value="P:ribosomal large subunit biogenesis"/>
    <property type="evidence" value="ECO:0007669"/>
    <property type="project" value="Ensembl"/>
</dbReference>
<dbReference type="GO" id="GO:0048705">
    <property type="term" value="P:skeletal system morphogenesis"/>
    <property type="evidence" value="ECO:0007669"/>
    <property type="project" value="Ensembl"/>
</dbReference>
<dbReference type="GO" id="GO:0001756">
    <property type="term" value="P:somitogenesis"/>
    <property type="evidence" value="ECO:0007669"/>
    <property type="project" value="Ensembl"/>
</dbReference>
<dbReference type="CDD" id="cd00200">
    <property type="entry name" value="WD40"/>
    <property type="match status" value="1"/>
</dbReference>
<dbReference type="FunFam" id="2.130.10.10:FF:000129">
    <property type="entry name" value="Notchless homolog 1 (Drosophila)"/>
    <property type="match status" value="1"/>
</dbReference>
<dbReference type="Gene3D" id="2.130.10.10">
    <property type="entry name" value="YVTN repeat-like/Quinoprotein amine dehydrogenase"/>
    <property type="match status" value="1"/>
</dbReference>
<dbReference type="InterPro" id="IPR020472">
    <property type="entry name" value="G-protein_beta_WD-40_rep"/>
</dbReference>
<dbReference type="InterPro" id="IPR001632">
    <property type="entry name" value="Gprotein_B"/>
</dbReference>
<dbReference type="InterPro" id="IPR012972">
    <property type="entry name" value="NLE"/>
</dbReference>
<dbReference type="InterPro" id="IPR015943">
    <property type="entry name" value="WD40/YVTN_repeat-like_dom_sf"/>
</dbReference>
<dbReference type="InterPro" id="IPR019775">
    <property type="entry name" value="WD40_repeat_CS"/>
</dbReference>
<dbReference type="InterPro" id="IPR036322">
    <property type="entry name" value="WD40_repeat_dom_sf"/>
</dbReference>
<dbReference type="InterPro" id="IPR001680">
    <property type="entry name" value="WD40_rpt"/>
</dbReference>
<dbReference type="PANTHER" id="PTHR19848:SF0">
    <property type="entry name" value="NOTCHLESS PROTEIN HOMOLOG 1"/>
    <property type="match status" value="1"/>
</dbReference>
<dbReference type="PANTHER" id="PTHR19848">
    <property type="entry name" value="WD40 REPEAT PROTEIN"/>
    <property type="match status" value="1"/>
</dbReference>
<dbReference type="Pfam" id="PF08154">
    <property type="entry name" value="NLE"/>
    <property type="match status" value="1"/>
</dbReference>
<dbReference type="Pfam" id="PF00400">
    <property type="entry name" value="WD40"/>
    <property type="match status" value="7"/>
</dbReference>
<dbReference type="PRINTS" id="PR00319">
    <property type="entry name" value="GPROTEINB"/>
</dbReference>
<dbReference type="PRINTS" id="PR00320">
    <property type="entry name" value="GPROTEINBRPT"/>
</dbReference>
<dbReference type="SMART" id="SM00320">
    <property type="entry name" value="WD40"/>
    <property type="match status" value="8"/>
</dbReference>
<dbReference type="SUPFAM" id="SSF50978">
    <property type="entry name" value="WD40 repeat-like"/>
    <property type="match status" value="1"/>
</dbReference>
<dbReference type="PROSITE" id="PS00678">
    <property type="entry name" value="WD_REPEATS_1"/>
    <property type="match status" value="4"/>
</dbReference>
<dbReference type="PROSITE" id="PS50082">
    <property type="entry name" value="WD_REPEATS_2"/>
    <property type="match status" value="7"/>
</dbReference>
<dbReference type="PROSITE" id="PS50294">
    <property type="entry name" value="WD_REPEATS_REGION"/>
    <property type="match status" value="1"/>
</dbReference>
<organism>
    <name type="scientific">Homo sapiens</name>
    <name type="common">Human</name>
    <dbReference type="NCBI Taxonomy" id="9606"/>
    <lineage>
        <taxon>Eukaryota</taxon>
        <taxon>Metazoa</taxon>
        <taxon>Chordata</taxon>
        <taxon>Craniata</taxon>
        <taxon>Vertebrata</taxon>
        <taxon>Euteleostomi</taxon>
        <taxon>Mammalia</taxon>
        <taxon>Eutheria</taxon>
        <taxon>Euarchontoglires</taxon>
        <taxon>Primates</taxon>
        <taxon>Haplorrhini</taxon>
        <taxon>Catarrhini</taxon>
        <taxon>Hominidae</taxon>
        <taxon>Homo</taxon>
    </lineage>
</organism>
<accession>Q9NVX2</accession>
<accession>O60868</accession>
<accession>Q59GJ8</accession>
<accession>Q9BU54</accession>
<gene>
    <name type="primary">NLE1</name>
    <name type="ORF">HUSSY-07</name>
</gene>
<name>NLE1_HUMAN</name>